<name>BIT61_SCHPO</name>
<feature type="chain" id="PRO_0000352803" description="Target of rapamycin complex 2 subunit bit61">
    <location>
        <begin position="1"/>
        <end position="422"/>
    </location>
</feature>
<feature type="region of interest" description="Disordered" evidence="1">
    <location>
        <begin position="48"/>
        <end position="101"/>
    </location>
</feature>
<feature type="compositionally biased region" description="Polar residues" evidence="1">
    <location>
        <begin position="48"/>
        <end position="69"/>
    </location>
</feature>
<feature type="modified residue" description="Phosphoserine" evidence="3">
    <location>
        <position position="109"/>
    </location>
</feature>
<feature type="modified residue" description="Phosphoserine" evidence="3">
    <location>
        <position position="132"/>
    </location>
</feature>
<feature type="modified residue" description="Phosphoserine" evidence="4">
    <location>
        <position position="201"/>
    </location>
</feature>
<keyword id="KW-0131">Cell cycle</keyword>
<keyword id="KW-0963">Cytoplasm</keyword>
<keyword id="KW-0469">Meiosis</keyword>
<keyword id="KW-0539">Nucleus</keyword>
<keyword id="KW-0597">Phosphoprotein</keyword>
<keyword id="KW-1185">Reference proteome</keyword>
<dbReference type="EMBL" id="CU329672">
    <property type="protein sequence ID" value="CAA20712.1"/>
    <property type="molecule type" value="Genomic_DNA"/>
</dbReference>
<dbReference type="PIR" id="T11714">
    <property type="entry name" value="T11714"/>
</dbReference>
<dbReference type="RefSeq" id="NP_588254.1">
    <property type="nucleotide sequence ID" value="NM_001023244.2"/>
</dbReference>
<dbReference type="BioGRID" id="275537">
    <property type="interactions" value="10"/>
</dbReference>
<dbReference type="FunCoup" id="O74547">
    <property type="interactions" value="9"/>
</dbReference>
<dbReference type="IntAct" id="O74547">
    <property type="interactions" value="1"/>
</dbReference>
<dbReference type="STRING" id="284812.O74547"/>
<dbReference type="iPTMnet" id="O74547"/>
<dbReference type="PaxDb" id="4896-SPCC777.08c.1"/>
<dbReference type="EnsemblFungi" id="SPCC777.08c.1">
    <property type="protein sequence ID" value="SPCC777.08c.1:pep"/>
    <property type="gene ID" value="SPCC777.08c"/>
</dbReference>
<dbReference type="GeneID" id="2538963"/>
<dbReference type="KEGG" id="spo:2538963"/>
<dbReference type="PomBase" id="SPCC777.08c">
    <property type="gene designation" value="bit61"/>
</dbReference>
<dbReference type="VEuPathDB" id="FungiDB:SPCC777.08c"/>
<dbReference type="eggNOG" id="ENOG502RZ40">
    <property type="taxonomic scope" value="Eukaryota"/>
</dbReference>
<dbReference type="HOGENOM" id="CLU_650803_0_0_1"/>
<dbReference type="InParanoid" id="O74547"/>
<dbReference type="OMA" id="PFNGQWP"/>
<dbReference type="Reactome" id="R-SPO-1257604">
    <property type="pathway name" value="PIP3 activates AKT signaling"/>
</dbReference>
<dbReference type="Reactome" id="R-SPO-389357">
    <property type="pathway name" value="CD28 dependent PI3K/Akt signaling"/>
</dbReference>
<dbReference type="Reactome" id="R-SPO-5218920">
    <property type="pathway name" value="VEGFR2 mediated vascular permeability"/>
</dbReference>
<dbReference type="Reactome" id="R-SPO-6804757">
    <property type="pathway name" value="Regulation of TP53 Degradation"/>
</dbReference>
<dbReference type="Reactome" id="R-SPO-9856530">
    <property type="pathway name" value="High laminar flow shear stress activates signaling by PIEZO1 and PECAM1:CDH5:KDR in endothelial cells"/>
</dbReference>
<dbReference type="PRO" id="PR:O74547"/>
<dbReference type="Proteomes" id="UP000002485">
    <property type="component" value="Chromosome III"/>
</dbReference>
<dbReference type="GO" id="GO:0005829">
    <property type="term" value="C:cytosol"/>
    <property type="evidence" value="ECO:0007005"/>
    <property type="project" value="PomBase"/>
</dbReference>
<dbReference type="GO" id="GO:0005634">
    <property type="term" value="C:nucleus"/>
    <property type="evidence" value="ECO:0007005"/>
    <property type="project" value="PomBase"/>
</dbReference>
<dbReference type="GO" id="GO:0031932">
    <property type="term" value="C:TORC2 complex"/>
    <property type="evidence" value="ECO:0000314"/>
    <property type="project" value="PomBase"/>
</dbReference>
<dbReference type="GO" id="GO:0019887">
    <property type="term" value="F:protein kinase regulator activity"/>
    <property type="evidence" value="ECO:0000269"/>
    <property type="project" value="PomBase"/>
</dbReference>
<dbReference type="GO" id="GO:0051321">
    <property type="term" value="P:meiotic cell cycle"/>
    <property type="evidence" value="ECO:0007669"/>
    <property type="project" value="UniProtKB-KW"/>
</dbReference>
<dbReference type="GO" id="GO:0038203">
    <property type="term" value="P:TORC2 signaling"/>
    <property type="evidence" value="ECO:0000353"/>
    <property type="project" value="PomBase"/>
</dbReference>
<dbReference type="InterPro" id="IPR013745">
    <property type="entry name" value="Bit61/PRR5"/>
</dbReference>
<dbReference type="PANTHER" id="PTHR32428">
    <property type="entry name" value="TARGET OF RAPAMYCIN COMPLEX 2 SUBUNIT BIT61-RELATED"/>
    <property type="match status" value="1"/>
</dbReference>
<dbReference type="PANTHER" id="PTHR32428:SF2">
    <property type="entry name" value="TARGET OF RAPAMYCIN COMPLEX 2 SUBUNIT BIT61-RELATED"/>
    <property type="match status" value="1"/>
</dbReference>
<dbReference type="Pfam" id="PF08539">
    <property type="entry name" value="HbrB"/>
    <property type="match status" value="1"/>
</dbReference>
<sequence>MVGRGSFSSTSSASSINWIPKNTKTSIESVSNTISLSENGQNQDLETVTTKESNVGDSDTTENIKSPFNGQWPFSRRSSQSSSHPVFEETHWSKHSKRPGKLNVLTPTSPSNVNAEVQSISTKTQLSLLNLSPHKHKKPKDGLDLSALQKTLNGSRNFLRGRRDAGGIFGASIPQSLVTNQIINGFGAASLAFAKLGKVRSPLEGRFNLVPISADETWLIVESEVCSLYSGEALHYSLEDLNGILILHLQALIRDTKMNEFVGHLETLFRKATKCLSDSLSPVPEELFLNRIIETWLFFFSSVLPYVQGVFLPIKTKLFDEQEKTQLPYEVNEFCSTNREKLNVHRLALMTFRDYMVLPIANRIQICIGRAESAENALDNAGEVFARLFQILSLLASVRTNDSKEQEITNLATKVRCLLIAS</sequence>
<organism>
    <name type="scientific">Schizosaccharomyces pombe (strain 972 / ATCC 24843)</name>
    <name type="common">Fission yeast</name>
    <dbReference type="NCBI Taxonomy" id="284812"/>
    <lineage>
        <taxon>Eukaryota</taxon>
        <taxon>Fungi</taxon>
        <taxon>Dikarya</taxon>
        <taxon>Ascomycota</taxon>
        <taxon>Taphrinomycotina</taxon>
        <taxon>Schizosaccharomycetes</taxon>
        <taxon>Schizosaccharomycetales</taxon>
        <taxon>Schizosaccharomycetaceae</taxon>
        <taxon>Schizosaccharomyces</taxon>
    </lineage>
</organism>
<comment type="function">
    <text evidence="7">Component of TORC2, which regulates multiple cellular processes to control cell growth in response to environmental signals. TORC2 is required for cell survival under various stress conditions. TORC2 positively controls G1 cell-cycle arrest, sexual development and amino acid uptake. Positively regulates amino acid uptake through the control of expression of amino acid permeases.</text>
</comment>
<comment type="subunit">
    <text evidence="3">The target of rapamycin complex 2 (TORC2) is composed of at least bit61, pop3/wat1, sin1, ste20 and tor1.</text>
</comment>
<comment type="subcellular location">
    <subcellularLocation>
        <location evidence="2">Cytoplasm</location>
    </subcellularLocation>
    <subcellularLocation>
        <location evidence="2">Nucleus</location>
    </subcellularLocation>
</comment>
<comment type="PTM">
    <text evidence="3">Either Thr-23, Thr-25 or Ser-26 and Ser-78 or Ser-79 are phosphorylated as well.</text>
</comment>
<comment type="similarity">
    <text evidence="6">Belongs to the BIT61 family.</text>
</comment>
<evidence type="ECO:0000256" key="1">
    <source>
        <dbReference type="SAM" id="MobiDB-lite"/>
    </source>
</evidence>
<evidence type="ECO:0000269" key="2">
    <source>
    </source>
</evidence>
<evidence type="ECO:0000269" key="3">
    <source>
    </source>
</evidence>
<evidence type="ECO:0000269" key="4">
    <source>
    </source>
</evidence>
<evidence type="ECO:0000303" key="5">
    <source>
    </source>
</evidence>
<evidence type="ECO:0000305" key="6"/>
<evidence type="ECO:0000305" key="7">
    <source>
    </source>
</evidence>
<evidence type="ECO:0000312" key="8">
    <source>
        <dbReference type="PomBase" id="SPCC777.08c"/>
    </source>
</evidence>
<proteinExistence type="evidence at protein level"/>
<accession>O74547</accession>
<protein>
    <recommendedName>
        <fullName evidence="5">Target of rapamycin complex 2 subunit bit61</fullName>
        <shortName>TORC2 subunit bit61</shortName>
    </recommendedName>
</protein>
<reference key="1">
    <citation type="journal article" date="2002" name="Nature">
        <title>The genome sequence of Schizosaccharomyces pombe.</title>
        <authorList>
            <person name="Wood V."/>
            <person name="Gwilliam R."/>
            <person name="Rajandream M.A."/>
            <person name="Lyne M.H."/>
            <person name="Lyne R."/>
            <person name="Stewart A."/>
            <person name="Sgouros J.G."/>
            <person name="Peat N."/>
            <person name="Hayles J."/>
            <person name="Baker S.G."/>
            <person name="Basham D."/>
            <person name="Bowman S."/>
            <person name="Brooks K."/>
            <person name="Brown D."/>
            <person name="Brown S."/>
            <person name="Chillingworth T."/>
            <person name="Churcher C.M."/>
            <person name="Collins M."/>
            <person name="Connor R."/>
            <person name="Cronin A."/>
            <person name="Davis P."/>
            <person name="Feltwell T."/>
            <person name="Fraser A."/>
            <person name="Gentles S."/>
            <person name="Goble A."/>
            <person name="Hamlin N."/>
            <person name="Harris D.E."/>
            <person name="Hidalgo J."/>
            <person name="Hodgson G."/>
            <person name="Holroyd S."/>
            <person name="Hornsby T."/>
            <person name="Howarth S."/>
            <person name="Huckle E.J."/>
            <person name="Hunt S."/>
            <person name="Jagels K."/>
            <person name="James K.D."/>
            <person name="Jones L."/>
            <person name="Jones M."/>
            <person name="Leather S."/>
            <person name="McDonald S."/>
            <person name="McLean J."/>
            <person name="Mooney P."/>
            <person name="Moule S."/>
            <person name="Mungall K.L."/>
            <person name="Murphy L.D."/>
            <person name="Niblett D."/>
            <person name="Odell C."/>
            <person name="Oliver K."/>
            <person name="O'Neil S."/>
            <person name="Pearson D."/>
            <person name="Quail M.A."/>
            <person name="Rabbinowitsch E."/>
            <person name="Rutherford K.M."/>
            <person name="Rutter S."/>
            <person name="Saunders D."/>
            <person name="Seeger K."/>
            <person name="Sharp S."/>
            <person name="Skelton J."/>
            <person name="Simmonds M.N."/>
            <person name="Squares R."/>
            <person name="Squares S."/>
            <person name="Stevens K."/>
            <person name="Taylor K."/>
            <person name="Taylor R.G."/>
            <person name="Tivey A."/>
            <person name="Walsh S.V."/>
            <person name="Warren T."/>
            <person name="Whitehead S."/>
            <person name="Woodward J.R."/>
            <person name="Volckaert G."/>
            <person name="Aert R."/>
            <person name="Robben J."/>
            <person name="Grymonprez B."/>
            <person name="Weltjens I."/>
            <person name="Vanstreels E."/>
            <person name="Rieger M."/>
            <person name="Schaefer M."/>
            <person name="Mueller-Auer S."/>
            <person name="Gabel C."/>
            <person name="Fuchs M."/>
            <person name="Duesterhoeft A."/>
            <person name="Fritzc C."/>
            <person name="Holzer E."/>
            <person name="Moestl D."/>
            <person name="Hilbert H."/>
            <person name="Borzym K."/>
            <person name="Langer I."/>
            <person name="Beck A."/>
            <person name="Lehrach H."/>
            <person name="Reinhardt R."/>
            <person name="Pohl T.M."/>
            <person name="Eger P."/>
            <person name="Zimmermann W."/>
            <person name="Wedler H."/>
            <person name="Wambutt R."/>
            <person name="Purnelle B."/>
            <person name="Goffeau A."/>
            <person name="Cadieu E."/>
            <person name="Dreano S."/>
            <person name="Gloux S."/>
            <person name="Lelaure V."/>
            <person name="Mottier S."/>
            <person name="Galibert F."/>
            <person name="Aves S.J."/>
            <person name="Xiang Z."/>
            <person name="Hunt C."/>
            <person name="Moore K."/>
            <person name="Hurst S.M."/>
            <person name="Lucas M."/>
            <person name="Rochet M."/>
            <person name="Gaillardin C."/>
            <person name="Tallada V.A."/>
            <person name="Garzon A."/>
            <person name="Thode G."/>
            <person name="Daga R.R."/>
            <person name="Cruzado L."/>
            <person name="Jimenez J."/>
            <person name="Sanchez M."/>
            <person name="del Rey F."/>
            <person name="Benito J."/>
            <person name="Dominguez A."/>
            <person name="Revuelta J.L."/>
            <person name="Moreno S."/>
            <person name="Armstrong J."/>
            <person name="Forsburg S.L."/>
            <person name="Cerutti L."/>
            <person name="Lowe T."/>
            <person name="McCombie W.R."/>
            <person name="Paulsen I."/>
            <person name="Potashkin J."/>
            <person name="Shpakovski G.V."/>
            <person name="Ussery D."/>
            <person name="Barrell B.G."/>
            <person name="Nurse P."/>
        </authorList>
    </citation>
    <scope>NUCLEOTIDE SEQUENCE [LARGE SCALE GENOMIC DNA]</scope>
    <source>
        <strain>972 / ATCC 24843</strain>
    </source>
</reference>
<reference key="2">
    <citation type="journal article" date="2006" name="Nat. Biotechnol.">
        <title>ORFeome cloning and global analysis of protein localization in the fission yeast Schizosaccharomyces pombe.</title>
        <authorList>
            <person name="Matsuyama A."/>
            <person name="Arai R."/>
            <person name="Yashiroda Y."/>
            <person name="Shirai A."/>
            <person name="Kamata A."/>
            <person name="Sekido S."/>
            <person name="Kobayashi Y."/>
            <person name="Hashimoto A."/>
            <person name="Hamamoto M."/>
            <person name="Hiraoka Y."/>
            <person name="Horinouchi S."/>
            <person name="Yoshida M."/>
        </authorList>
    </citation>
    <scope>SUBCELLULAR LOCATION [LARGE SCALE ANALYSIS]</scope>
</reference>
<reference key="3">
    <citation type="journal article" date="2007" name="Genes Cells">
        <title>Rapamycin sensitivity of the Schizosaccharomyces pombe tor2 mutant and organization of two highly phosphorylated TOR complexes by specific and common subunits.</title>
        <authorList>
            <person name="Hayashi T."/>
            <person name="Hatanaka M."/>
            <person name="Nagao K."/>
            <person name="Nakaseko Y."/>
            <person name="Kanoh J."/>
            <person name="Kokubu A."/>
            <person name="Ebe M."/>
            <person name="Yanagida M."/>
        </authorList>
    </citation>
    <scope>IDENTIFICATION IN THE TORC2 COMPLEX</scope>
    <scope>PHOSPHORYLATION AT SER-109 AND SER-132</scope>
    <scope>IDENTIFICATION BY MASS SPECTROMETRY</scope>
</reference>
<reference key="4">
    <citation type="journal article" date="2008" name="J. Proteome Res.">
        <title>Phosphoproteome analysis of fission yeast.</title>
        <authorList>
            <person name="Wilson-Grady J.T."/>
            <person name="Villen J."/>
            <person name="Gygi S.P."/>
        </authorList>
    </citation>
    <scope>PHOSPHORYLATION [LARGE SCALE ANALYSIS] AT SER-201</scope>
    <scope>IDENTIFICATION BY MASS SPECTROMETRY</scope>
</reference>
<gene>
    <name evidence="5" type="primary">bit61</name>
    <name evidence="8" type="ORF">SPCC777.08c</name>
</gene>